<proteinExistence type="inferred from homology"/>
<name>YQGE_SHIBS</name>
<protein>
    <recommendedName>
        <fullName evidence="1">UPF0301 protein YqgE</fullName>
    </recommendedName>
</protein>
<reference key="1">
    <citation type="journal article" date="2005" name="Nucleic Acids Res.">
        <title>Genome dynamics and diversity of Shigella species, the etiologic agents of bacillary dysentery.</title>
        <authorList>
            <person name="Yang F."/>
            <person name="Yang J."/>
            <person name="Zhang X."/>
            <person name="Chen L."/>
            <person name="Jiang Y."/>
            <person name="Yan Y."/>
            <person name="Tang X."/>
            <person name="Wang J."/>
            <person name="Xiong Z."/>
            <person name="Dong J."/>
            <person name="Xue Y."/>
            <person name="Zhu Y."/>
            <person name="Xu X."/>
            <person name="Sun L."/>
            <person name="Chen S."/>
            <person name="Nie H."/>
            <person name="Peng J."/>
            <person name="Xu J."/>
            <person name="Wang Y."/>
            <person name="Yuan Z."/>
            <person name="Wen Y."/>
            <person name="Yao Z."/>
            <person name="Shen Y."/>
            <person name="Qiang B."/>
            <person name="Hou Y."/>
            <person name="Yu J."/>
            <person name="Jin Q."/>
        </authorList>
    </citation>
    <scope>NUCLEOTIDE SEQUENCE [LARGE SCALE GENOMIC DNA]</scope>
    <source>
        <strain>Sb227</strain>
    </source>
</reference>
<feature type="chain" id="PRO_0000258881" description="UPF0301 protein YqgE">
    <location>
        <begin position="1"/>
        <end position="187"/>
    </location>
</feature>
<gene>
    <name evidence="1" type="primary">yqgE</name>
    <name type="ordered locus">SBO_3042</name>
</gene>
<comment type="similarity">
    <text evidence="1">Belongs to the UPF0301 (AlgH) family.</text>
</comment>
<comment type="sequence caution" evidence="2">
    <conflict type="erroneous initiation">
        <sequence resource="EMBL-CDS" id="ABB67548"/>
    </conflict>
</comment>
<sequence>MNLQHHFLIAMPALQDPIFRRSVVYICEHNTNGAMGIIVNKPLENLKIEGILEKLKITPEPRDESIRLDKPVMLGGPLAEDRGFILHTPPSNFASSIRISDNTVMTTSRDVLETLGTDKQPSDVLVALGYASWEKGQLEQEILDNAWLTASADLNILFKTPIADRWREAAKLIGVDILTMPGVAGHA</sequence>
<evidence type="ECO:0000255" key="1">
    <source>
        <dbReference type="HAMAP-Rule" id="MF_00758"/>
    </source>
</evidence>
<evidence type="ECO:0000305" key="2"/>
<organism>
    <name type="scientific">Shigella boydii serotype 4 (strain Sb227)</name>
    <dbReference type="NCBI Taxonomy" id="300268"/>
    <lineage>
        <taxon>Bacteria</taxon>
        <taxon>Pseudomonadati</taxon>
        <taxon>Pseudomonadota</taxon>
        <taxon>Gammaproteobacteria</taxon>
        <taxon>Enterobacterales</taxon>
        <taxon>Enterobacteriaceae</taxon>
        <taxon>Shigella</taxon>
    </lineage>
</organism>
<accession>Q31WL0</accession>
<dbReference type="EMBL" id="CP000036">
    <property type="protein sequence ID" value="ABB67548.1"/>
    <property type="status" value="ALT_INIT"/>
    <property type="molecule type" value="Genomic_DNA"/>
</dbReference>
<dbReference type="RefSeq" id="WP_004986431.1">
    <property type="nucleotide sequence ID" value="NC_007613.1"/>
</dbReference>
<dbReference type="SMR" id="Q31WL0"/>
<dbReference type="KEGG" id="sbo:SBO_3042"/>
<dbReference type="HOGENOM" id="CLU_057596_1_1_6"/>
<dbReference type="Proteomes" id="UP000007067">
    <property type="component" value="Chromosome"/>
</dbReference>
<dbReference type="GO" id="GO:0005829">
    <property type="term" value="C:cytosol"/>
    <property type="evidence" value="ECO:0007669"/>
    <property type="project" value="TreeGrafter"/>
</dbReference>
<dbReference type="FunFam" id="3.30.70.1300:FF:000001">
    <property type="entry name" value="UPF0301 protein YqgE"/>
    <property type="match status" value="1"/>
</dbReference>
<dbReference type="Gene3D" id="3.40.1740.10">
    <property type="entry name" value="VC0467-like"/>
    <property type="match status" value="1"/>
</dbReference>
<dbReference type="Gene3D" id="3.30.70.1300">
    <property type="entry name" value="VC0467-like domains"/>
    <property type="match status" value="1"/>
</dbReference>
<dbReference type="HAMAP" id="MF_00758">
    <property type="entry name" value="UPF0301"/>
    <property type="match status" value="1"/>
</dbReference>
<dbReference type="InterPro" id="IPR003774">
    <property type="entry name" value="AlgH-like"/>
</dbReference>
<dbReference type="NCBIfam" id="NF001266">
    <property type="entry name" value="PRK00228.1-1"/>
    <property type="match status" value="1"/>
</dbReference>
<dbReference type="PANTHER" id="PTHR30327">
    <property type="entry name" value="UNCHARACTERIZED PROTEIN YQGE"/>
    <property type="match status" value="1"/>
</dbReference>
<dbReference type="PANTHER" id="PTHR30327:SF1">
    <property type="entry name" value="UPF0301 PROTEIN YQGE"/>
    <property type="match status" value="1"/>
</dbReference>
<dbReference type="Pfam" id="PF02622">
    <property type="entry name" value="DUF179"/>
    <property type="match status" value="1"/>
</dbReference>
<dbReference type="SUPFAM" id="SSF143456">
    <property type="entry name" value="VC0467-like"/>
    <property type="match status" value="1"/>
</dbReference>